<gene>
    <name evidence="1" type="primary">rpsE</name>
    <name type="ordered locus">Desal_1202</name>
</gene>
<accession>C6C1A2</accession>
<protein>
    <recommendedName>
        <fullName evidence="1">Small ribosomal subunit protein uS5</fullName>
    </recommendedName>
    <alternativeName>
        <fullName evidence="2">30S ribosomal protein S5</fullName>
    </alternativeName>
</protein>
<reference key="1">
    <citation type="submission" date="2009-06" db="EMBL/GenBank/DDBJ databases">
        <title>Complete sequence of Desulfovibrio salexigens DSM 2638.</title>
        <authorList>
            <consortium name="US DOE Joint Genome Institute"/>
            <person name="Lucas S."/>
            <person name="Copeland A."/>
            <person name="Lapidus A."/>
            <person name="Glavina del Rio T."/>
            <person name="Tice H."/>
            <person name="Bruce D."/>
            <person name="Goodwin L."/>
            <person name="Pitluck S."/>
            <person name="Munk A.C."/>
            <person name="Brettin T."/>
            <person name="Detter J.C."/>
            <person name="Han C."/>
            <person name="Tapia R."/>
            <person name="Larimer F."/>
            <person name="Land M."/>
            <person name="Hauser L."/>
            <person name="Kyrpides N."/>
            <person name="Anderson I."/>
            <person name="Wall J.D."/>
            <person name="Arkin A.P."/>
            <person name="Dehal P."/>
            <person name="Chivian D."/>
            <person name="Giles B."/>
            <person name="Hazen T.C."/>
        </authorList>
    </citation>
    <scope>NUCLEOTIDE SEQUENCE [LARGE SCALE GENOMIC DNA]</scope>
    <source>
        <strain>ATCC 14822 / DSM 2638 / NCIMB 8403 / VKM B-1763</strain>
    </source>
</reference>
<feature type="chain" id="PRO_1000214318" description="Small ribosomal subunit protein uS5">
    <location>
        <begin position="1"/>
        <end position="163"/>
    </location>
</feature>
<feature type="domain" description="S5 DRBM" evidence="1">
    <location>
        <begin position="8"/>
        <end position="71"/>
    </location>
</feature>
<keyword id="KW-1185">Reference proteome</keyword>
<keyword id="KW-0687">Ribonucleoprotein</keyword>
<keyword id="KW-0689">Ribosomal protein</keyword>
<keyword id="KW-0694">RNA-binding</keyword>
<keyword id="KW-0699">rRNA-binding</keyword>
<sequence length="163" mass="17220">MEQNDLGLIEKIVYLNRVAKVVKGGRRFSFSALVVVGDGKGQVGFGLGKANEVPEAIRKASEKARKEMISVPLLDGTLPYEVLGRYGAGRVMLKPASKGTGIIAGGPVRAVLEVVGVHDILTKAIGTNNPHNVLRATIAGLASLRSADEVGQLRGKKVVTPRK</sequence>
<comment type="function">
    <text evidence="1">With S4 and S12 plays an important role in translational accuracy.</text>
</comment>
<comment type="function">
    <text evidence="1">Located at the back of the 30S subunit body where it stabilizes the conformation of the head with respect to the body.</text>
</comment>
<comment type="subunit">
    <text evidence="1">Part of the 30S ribosomal subunit. Contacts proteins S4 and S8.</text>
</comment>
<comment type="domain">
    <text>The N-terminal domain interacts with the head of the 30S subunit; the C-terminal domain interacts with the body and contacts protein S4. The interaction surface between S4 and S5 is involved in control of translational fidelity.</text>
</comment>
<comment type="similarity">
    <text evidence="1">Belongs to the universal ribosomal protein uS5 family.</text>
</comment>
<organism>
    <name type="scientific">Maridesulfovibrio salexigens (strain ATCC 14822 / DSM 2638 / NCIMB 8403 / VKM B-1763)</name>
    <name type="common">Desulfovibrio salexigens</name>
    <dbReference type="NCBI Taxonomy" id="526222"/>
    <lineage>
        <taxon>Bacteria</taxon>
        <taxon>Pseudomonadati</taxon>
        <taxon>Thermodesulfobacteriota</taxon>
        <taxon>Desulfovibrionia</taxon>
        <taxon>Desulfovibrionales</taxon>
        <taxon>Desulfovibrionaceae</taxon>
        <taxon>Maridesulfovibrio</taxon>
    </lineage>
</organism>
<dbReference type="EMBL" id="CP001649">
    <property type="protein sequence ID" value="ACS79265.1"/>
    <property type="molecule type" value="Genomic_DNA"/>
</dbReference>
<dbReference type="RefSeq" id="WP_015851083.1">
    <property type="nucleotide sequence ID" value="NC_012881.1"/>
</dbReference>
<dbReference type="SMR" id="C6C1A2"/>
<dbReference type="STRING" id="526222.Desal_1202"/>
<dbReference type="KEGG" id="dsa:Desal_1202"/>
<dbReference type="eggNOG" id="COG0098">
    <property type="taxonomic scope" value="Bacteria"/>
</dbReference>
<dbReference type="HOGENOM" id="CLU_065898_2_2_7"/>
<dbReference type="OrthoDB" id="9809045at2"/>
<dbReference type="Proteomes" id="UP000002601">
    <property type="component" value="Chromosome"/>
</dbReference>
<dbReference type="GO" id="GO:0015935">
    <property type="term" value="C:small ribosomal subunit"/>
    <property type="evidence" value="ECO:0007669"/>
    <property type="project" value="InterPro"/>
</dbReference>
<dbReference type="GO" id="GO:0019843">
    <property type="term" value="F:rRNA binding"/>
    <property type="evidence" value="ECO:0007669"/>
    <property type="project" value="UniProtKB-UniRule"/>
</dbReference>
<dbReference type="GO" id="GO:0003735">
    <property type="term" value="F:structural constituent of ribosome"/>
    <property type="evidence" value="ECO:0007669"/>
    <property type="project" value="InterPro"/>
</dbReference>
<dbReference type="GO" id="GO:0006412">
    <property type="term" value="P:translation"/>
    <property type="evidence" value="ECO:0007669"/>
    <property type="project" value="UniProtKB-UniRule"/>
</dbReference>
<dbReference type="FunFam" id="3.30.160.20:FF:000001">
    <property type="entry name" value="30S ribosomal protein S5"/>
    <property type="match status" value="1"/>
</dbReference>
<dbReference type="FunFam" id="3.30.230.10:FF:000002">
    <property type="entry name" value="30S ribosomal protein S5"/>
    <property type="match status" value="1"/>
</dbReference>
<dbReference type="Gene3D" id="3.30.160.20">
    <property type="match status" value="1"/>
</dbReference>
<dbReference type="Gene3D" id="3.30.230.10">
    <property type="match status" value="1"/>
</dbReference>
<dbReference type="HAMAP" id="MF_01307_B">
    <property type="entry name" value="Ribosomal_uS5_B"/>
    <property type="match status" value="1"/>
</dbReference>
<dbReference type="InterPro" id="IPR020568">
    <property type="entry name" value="Ribosomal_Su5_D2-typ_SF"/>
</dbReference>
<dbReference type="InterPro" id="IPR000851">
    <property type="entry name" value="Ribosomal_uS5"/>
</dbReference>
<dbReference type="InterPro" id="IPR005712">
    <property type="entry name" value="Ribosomal_uS5_bac-type"/>
</dbReference>
<dbReference type="InterPro" id="IPR005324">
    <property type="entry name" value="Ribosomal_uS5_C"/>
</dbReference>
<dbReference type="InterPro" id="IPR013810">
    <property type="entry name" value="Ribosomal_uS5_N"/>
</dbReference>
<dbReference type="InterPro" id="IPR018192">
    <property type="entry name" value="Ribosomal_uS5_N_CS"/>
</dbReference>
<dbReference type="InterPro" id="IPR014721">
    <property type="entry name" value="Ribsml_uS5_D2-typ_fold_subgr"/>
</dbReference>
<dbReference type="NCBIfam" id="TIGR01021">
    <property type="entry name" value="rpsE_bact"/>
    <property type="match status" value="1"/>
</dbReference>
<dbReference type="PANTHER" id="PTHR48277">
    <property type="entry name" value="MITOCHONDRIAL RIBOSOMAL PROTEIN S5"/>
    <property type="match status" value="1"/>
</dbReference>
<dbReference type="PANTHER" id="PTHR48277:SF1">
    <property type="entry name" value="MITOCHONDRIAL RIBOSOMAL PROTEIN S5"/>
    <property type="match status" value="1"/>
</dbReference>
<dbReference type="Pfam" id="PF00333">
    <property type="entry name" value="Ribosomal_S5"/>
    <property type="match status" value="1"/>
</dbReference>
<dbReference type="Pfam" id="PF03719">
    <property type="entry name" value="Ribosomal_S5_C"/>
    <property type="match status" value="1"/>
</dbReference>
<dbReference type="SUPFAM" id="SSF54768">
    <property type="entry name" value="dsRNA-binding domain-like"/>
    <property type="match status" value="1"/>
</dbReference>
<dbReference type="SUPFAM" id="SSF54211">
    <property type="entry name" value="Ribosomal protein S5 domain 2-like"/>
    <property type="match status" value="1"/>
</dbReference>
<dbReference type="PROSITE" id="PS00585">
    <property type="entry name" value="RIBOSOMAL_S5"/>
    <property type="match status" value="1"/>
</dbReference>
<dbReference type="PROSITE" id="PS50881">
    <property type="entry name" value="S5_DSRBD"/>
    <property type="match status" value="1"/>
</dbReference>
<name>RS5_MARSD</name>
<proteinExistence type="inferred from homology"/>
<evidence type="ECO:0000255" key="1">
    <source>
        <dbReference type="HAMAP-Rule" id="MF_01307"/>
    </source>
</evidence>
<evidence type="ECO:0000305" key="2"/>